<organismHost>
    <name type="scientific">Homo sapiens</name>
    <name type="common">Human</name>
    <dbReference type="NCBI Taxonomy" id="9606"/>
</organismHost>
<dbReference type="EMBL" id="L25528">
    <property type="protein sequence ID" value="AAA16738.1"/>
    <property type="status" value="ALT_INIT"/>
    <property type="molecule type" value="Genomic_DNA"/>
</dbReference>
<dbReference type="EMBL" id="X83413">
    <property type="protein sequence ID" value="CAA58410.1"/>
    <property type="molecule type" value="Genomic_DNA"/>
</dbReference>
<dbReference type="PIR" id="T09325">
    <property type="entry name" value="T09325"/>
</dbReference>
<dbReference type="RefSeq" id="NP_042923.2">
    <property type="nucleotide sequence ID" value="NC_001664.2"/>
</dbReference>
<dbReference type="SMR" id="P52437"/>
<dbReference type="GeneID" id="1487908"/>
<dbReference type="KEGG" id="vg:1487908"/>
<dbReference type="Proteomes" id="UP000009295">
    <property type="component" value="Segment"/>
</dbReference>
<dbReference type="GO" id="GO:0044177">
    <property type="term" value="C:host cell Golgi apparatus"/>
    <property type="evidence" value="ECO:0007669"/>
    <property type="project" value="UniProtKB-SubCell"/>
</dbReference>
<dbReference type="GO" id="GO:0042025">
    <property type="term" value="C:host cell nucleus"/>
    <property type="evidence" value="ECO:0007669"/>
    <property type="project" value="UniProtKB-SubCell"/>
</dbReference>
<dbReference type="GO" id="GO:0019033">
    <property type="term" value="C:viral tegument"/>
    <property type="evidence" value="ECO:0007669"/>
    <property type="project" value="UniProtKB-SubCell"/>
</dbReference>
<dbReference type="GO" id="GO:0019068">
    <property type="term" value="P:virion assembly"/>
    <property type="evidence" value="ECO:0007669"/>
    <property type="project" value="InterPro"/>
</dbReference>
<dbReference type="HAMAP" id="MF_04043">
    <property type="entry name" value="HSV_ITP"/>
    <property type="match status" value="1"/>
</dbReference>
<dbReference type="InterPro" id="IPR007611">
    <property type="entry name" value="Herpes_U30"/>
</dbReference>
<dbReference type="InterPro" id="IPR034738">
    <property type="entry name" value="HSV_ITP"/>
</dbReference>
<dbReference type="Pfam" id="PF04523">
    <property type="entry name" value="Herpes_U30"/>
    <property type="match status" value="1"/>
</dbReference>
<reference key="1">
    <citation type="journal article" date="1994" name="J. Virol.">
        <title>Nucleotide sequence analysis of a 38.5-kilobase-pair region of the genome of human herpesvirus 6 encoding human cytomegalovirus immediate-early gene homologs and transactivating functions.</title>
        <authorList>
            <person name="Nicholas J."/>
            <person name="Martin M.E.D."/>
        </authorList>
    </citation>
    <scope>NUCLEOTIDE SEQUENCE [GENOMIC DNA]</scope>
</reference>
<reference key="2">
    <citation type="journal article" date="1995" name="Virology">
        <title>The DNA sequence of human herpesvirus-6: structure, coding content, and genome evolution.</title>
        <authorList>
            <person name="Gompels U.A."/>
            <person name="Nicholas J."/>
            <person name="Lawrence G.L."/>
            <person name="Jones M."/>
            <person name="Thomson B.J."/>
            <person name="Martin M.E.D."/>
            <person name="Efstathiou S."/>
            <person name="Craxton M.A."/>
            <person name="Macaulay H.A."/>
        </authorList>
    </citation>
    <scope>NUCLEOTIDE SEQUENCE [LARGE SCALE GENOMIC DNA]</scope>
</reference>
<sequence>MTHDNRQLLPQETKLVTPNKDTLSSRYLHVLIIDNTLSTIEFVYMAVKAVLTQVDTLNALEQRKNRPTNRILGLSTSVSKRYINIPKFSSSGASNSQGVKTLAAIRKFCLPDKNCFRNFLSFSTTLFKVPSSIDIYFLFFTASTVSTMAARALDLEFILSSLKNSTSPESLLAATAKIELLSLAADSVTHNRVIAFINRLTPKKYHFDLIRQYAVFYFLNSTTLTSENKLLSAELLYEELSQIPSSSSSGTELENLNNAEVLYVFDRILNSIKMLKNELSSPIGKLRAQPAANDPGTDKTIKYSKIQSIIQKINSFTHENSLLANCRAVVELIDDLYRKLYSWFLHVLTFEDIQFPGDTFLDRLLKMDYCFTYYPSSNRHLIDLFEKTLDNQTFTNLDKFFDTSGNSPELLYQKTFSLKIFSKNLTAQDNGLYIYPLLKTDLSILDFLGTENILFHRGLIYHILHQKTIPQERENDLNKINQFFATVIQQVIETKSSCLPASLSQLLDTIFHFNRIGLNMETCRTYIEILSNHMATPDTQPIINTFTINLTHIVFTAHVFFICMENFSPTFIFYNRKKLILEQQRAILIIERNDYSTLWKQISDHIECLFNVSLSESFFKEYTKGGNEDQKQFLYKNLFEKWGNVFFPFTYSVSTSNNSTAHHITTLELRDICKEVYQSDSPDAYESLLPYSTHPSFKTLFVKIYVIPMVSHITNLTFDKLQSDCRLLTLIHACKLLLPSQHLLLHYMAWLYAFSINVDHIDLGTFTVIKSVIFKIADHINVMTHTIYSPETNLLVSILLNAYTNYLQKYVNPWIKQTITANFSLIQTYITFTKQCASILATKCNINLDNLFIYITIGTDKIVTTSFCSFIATCRNLVRQHEEFEKSLQTIQISEITLTGMLRNIITSVSSSKELLTNEALQKFIDTVQRISQHVNETYHSISVNLEKCKTSNDILIESLKKIIYIVDVLSSNAILNTSLASRCLEAANLAVSNNSFTILEIKKDAVAVFKPFITQLFESMKPTTSLHKKLMSTQKLTTDHIPFLDTFDDRYNLVRHVERQLNWYAAHAEAAQQDLITPLKF</sequence>
<keyword id="KW-1035">Host cytoplasm</keyword>
<keyword id="KW-1040">Host Golgi apparatus</keyword>
<keyword id="KW-1048">Host nucleus</keyword>
<keyword id="KW-1185">Reference proteome</keyword>
<keyword id="KW-0946">Virion</keyword>
<keyword id="KW-0920">Virion tegument</keyword>
<comment type="function">
    <text evidence="1">Plays an essential role in cytoplasmic secondary envelopment during viral egress. Interacts with the capsid via the large tegument protein/LTP and participates in its transport to the host trans-Golgi network (TGN) where secondary envelopment occurs. Modulates tegumentation and capsid accumulation at the viral assembly complex.</text>
</comment>
<comment type="subunit">
    <text evidence="1">Interacts (via C-terminus) with the large tegument protein/LTP (via N-terminus).</text>
</comment>
<comment type="subcellular location">
    <subcellularLocation>
        <location evidence="1">Virion tegument</location>
    </subcellularLocation>
    <subcellularLocation>
        <location evidence="1">Host cytoplasm</location>
    </subcellularLocation>
    <subcellularLocation>
        <location evidence="1">Host nucleus</location>
    </subcellularLocation>
    <subcellularLocation>
        <location evidence="1">Host Golgi apparatus</location>
        <location evidence="1">Host trans-Golgi network</location>
    </subcellularLocation>
</comment>
<comment type="similarity">
    <text evidence="1">Belongs to the herpesviridae inner tegument protein family.</text>
</comment>
<comment type="sequence caution" evidence="2">
    <conflict type="erroneous initiation">
        <sequence resource="EMBL-CDS" id="AAA16738"/>
    </conflict>
    <text>Extended N-terminus.</text>
</comment>
<protein>
    <recommendedName>
        <fullName evidence="1">Inner tegument protein</fullName>
    </recommendedName>
</protein>
<proteinExistence type="inferred from homology"/>
<name>ITP_HHV6U</name>
<feature type="chain" id="PRO_0000116048" description="Inner tegument protein">
    <location>
        <begin position="1"/>
        <end position="1082"/>
    </location>
</feature>
<feature type="region of interest" description="Interaction with large tegument protein" evidence="1">
    <location>
        <begin position="604"/>
        <end position="1082"/>
    </location>
</feature>
<gene>
    <name type="primary">U30</name>
    <name type="synonym">P2RF1</name>
</gene>
<evidence type="ECO:0000255" key="1">
    <source>
        <dbReference type="HAMAP-Rule" id="MF_04043"/>
    </source>
</evidence>
<evidence type="ECO:0000305" key="2"/>
<accession>P52437</accession>
<accession>Q69054</accession>
<organism>
    <name type="scientific">Human herpesvirus 6A (strain Uganda-1102)</name>
    <name type="common">HHV-6 variant A</name>
    <name type="synonym">Human B lymphotropic virus</name>
    <dbReference type="NCBI Taxonomy" id="10370"/>
    <lineage>
        <taxon>Viruses</taxon>
        <taxon>Duplodnaviria</taxon>
        <taxon>Heunggongvirae</taxon>
        <taxon>Peploviricota</taxon>
        <taxon>Herviviricetes</taxon>
        <taxon>Herpesvirales</taxon>
        <taxon>Orthoherpesviridae</taxon>
        <taxon>Betaherpesvirinae</taxon>
        <taxon>Roseolovirus</taxon>
        <taxon>Roseolovirus humanbeta6a</taxon>
        <taxon>Human betaherpesvirus 6A</taxon>
    </lineage>
</organism>